<sequence length="482" mass="51287">MRAMPLSIGTIHFVGIGGIGMSGIAEVLHNLGYSVQGSDIADNYNVARLRTLGIRVEIGHRAENLGEAAVVVISSAVRTDNPEVVAARAALVPVVRRAEMLAELMRLKWSVAVAGTHGKTTTTSMVAALLDGAGFDPTIINGGIINALGTNARLGSGDWMVVEADESDGTFTKLPATIAVVTNMDPEHLDFYGTFEKEREAFDRFVENIPFYGFAALCTDHPEVQALVARADRRIVTYGFNPQADVRAVNVEGDHRGAFYDVQVSERVTGEARTIERVHLPMYGLHNVQNSLAAIAVAINMGIADEQIRASFARFSGVKRRFTRTGESNGVVVIDDYGHHPVEIQAVLKAARMAGSGRTIAVVQPHRYSRLSSLFEEFCTCFNDADAVIVADVYAAGEQPVEGASKEALVEGLRTHGHRNVQALPSPEALAGIVRELAQPGDMVVCLGAGSITGWANRLPAELDALHGISGGTAPAAKAGGT</sequence>
<evidence type="ECO:0000255" key="1">
    <source>
        <dbReference type="HAMAP-Rule" id="MF_00046"/>
    </source>
</evidence>
<proteinExistence type="inferred from homology"/>
<organism>
    <name type="scientific">Rhodospirillum centenum (strain ATCC 51521 / SW)</name>
    <dbReference type="NCBI Taxonomy" id="414684"/>
    <lineage>
        <taxon>Bacteria</taxon>
        <taxon>Pseudomonadati</taxon>
        <taxon>Pseudomonadota</taxon>
        <taxon>Alphaproteobacteria</taxon>
        <taxon>Rhodospirillales</taxon>
        <taxon>Rhodospirillaceae</taxon>
        <taxon>Rhodospirillum</taxon>
    </lineage>
</organism>
<keyword id="KW-0067">ATP-binding</keyword>
<keyword id="KW-0131">Cell cycle</keyword>
<keyword id="KW-0132">Cell division</keyword>
<keyword id="KW-0133">Cell shape</keyword>
<keyword id="KW-0961">Cell wall biogenesis/degradation</keyword>
<keyword id="KW-0963">Cytoplasm</keyword>
<keyword id="KW-0436">Ligase</keyword>
<keyword id="KW-0547">Nucleotide-binding</keyword>
<keyword id="KW-0573">Peptidoglycan synthesis</keyword>
<keyword id="KW-1185">Reference proteome</keyword>
<gene>
    <name evidence="1" type="primary">murC</name>
    <name type="ordered locus">RC1_0612</name>
</gene>
<protein>
    <recommendedName>
        <fullName evidence="1">UDP-N-acetylmuramate--L-alanine ligase</fullName>
        <ecNumber evidence="1">6.3.2.8</ecNumber>
    </recommendedName>
    <alternativeName>
        <fullName evidence="1">UDP-N-acetylmuramoyl-L-alanine synthetase</fullName>
    </alternativeName>
</protein>
<accession>B6IRG1</accession>
<comment type="function">
    <text evidence="1">Cell wall formation.</text>
</comment>
<comment type="catalytic activity">
    <reaction evidence="1">
        <text>UDP-N-acetyl-alpha-D-muramate + L-alanine + ATP = UDP-N-acetyl-alpha-D-muramoyl-L-alanine + ADP + phosphate + H(+)</text>
        <dbReference type="Rhea" id="RHEA:23372"/>
        <dbReference type="ChEBI" id="CHEBI:15378"/>
        <dbReference type="ChEBI" id="CHEBI:30616"/>
        <dbReference type="ChEBI" id="CHEBI:43474"/>
        <dbReference type="ChEBI" id="CHEBI:57972"/>
        <dbReference type="ChEBI" id="CHEBI:70757"/>
        <dbReference type="ChEBI" id="CHEBI:83898"/>
        <dbReference type="ChEBI" id="CHEBI:456216"/>
        <dbReference type="EC" id="6.3.2.8"/>
    </reaction>
</comment>
<comment type="pathway">
    <text evidence="1">Cell wall biogenesis; peptidoglycan biosynthesis.</text>
</comment>
<comment type="subcellular location">
    <subcellularLocation>
        <location evidence="1">Cytoplasm</location>
    </subcellularLocation>
</comment>
<comment type="similarity">
    <text evidence="1">Belongs to the MurCDEF family.</text>
</comment>
<dbReference type="EC" id="6.3.2.8" evidence="1"/>
<dbReference type="EMBL" id="CP000613">
    <property type="protein sequence ID" value="ACI98047.1"/>
    <property type="molecule type" value="Genomic_DNA"/>
</dbReference>
<dbReference type="RefSeq" id="WP_012565839.1">
    <property type="nucleotide sequence ID" value="NC_011420.2"/>
</dbReference>
<dbReference type="SMR" id="B6IRG1"/>
<dbReference type="STRING" id="414684.RC1_0612"/>
<dbReference type="KEGG" id="rce:RC1_0612"/>
<dbReference type="eggNOG" id="COG0773">
    <property type="taxonomic scope" value="Bacteria"/>
</dbReference>
<dbReference type="HOGENOM" id="CLU_028104_2_2_5"/>
<dbReference type="OrthoDB" id="9804126at2"/>
<dbReference type="UniPathway" id="UPA00219"/>
<dbReference type="Proteomes" id="UP000001591">
    <property type="component" value="Chromosome"/>
</dbReference>
<dbReference type="GO" id="GO:0005737">
    <property type="term" value="C:cytoplasm"/>
    <property type="evidence" value="ECO:0007669"/>
    <property type="project" value="UniProtKB-SubCell"/>
</dbReference>
<dbReference type="GO" id="GO:0005524">
    <property type="term" value="F:ATP binding"/>
    <property type="evidence" value="ECO:0007669"/>
    <property type="project" value="UniProtKB-UniRule"/>
</dbReference>
<dbReference type="GO" id="GO:0008763">
    <property type="term" value="F:UDP-N-acetylmuramate-L-alanine ligase activity"/>
    <property type="evidence" value="ECO:0007669"/>
    <property type="project" value="UniProtKB-UniRule"/>
</dbReference>
<dbReference type="GO" id="GO:0051301">
    <property type="term" value="P:cell division"/>
    <property type="evidence" value="ECO:0007669"/>
    <property type="project" value="UniProtKB-KW"/>
</dbReference>
<dbReference type="GO" id="GO:0071555">
    <property type="term" value="P:cell wall organization"/>
    <property type="evidence" value="ECO:0007669"/>
    <property type="project" value="UniProtKB-KW"/>
</dbReference>
<dbReference type="GO" id="GO:0009252">
    <property type="term" value="P:peptidoglycan biosynthetic process"/>
    <property type="evidence" value="ECO:0007669"/>
    <property type="project" value="UniProtKB-UniRule"/>
</dbReference>
<dbReference type="GO" id="GO:0008360">
    <property type="term" value="P:regulation of cell shape"/>
    <property type="evidence" value="ECO:0007669"/>
    <property type="project" value="UniProtKB-KW"/>
</dbReference>
<dbReference type="Gene3D" id="3.90.190.20">
    <property type="entry name" value="Mur ligase, C-terminal domain"/>
    <property type="match status" value="1"/>
</dbReference>
<dbReference type="Gene3D" id="3.40.1190.10">
    <property type="entry name" value="Mur-like, catalytic domain"/>
    <property type="match status" value="1"/>
</dbReference>
<dbReference type="Gene3D" id="3.40.50.720">
    <property type="entry name" value="NAD(P)-binding Rossmann-like Domain"/>
    <property type="match status" value="1"/>
</dbReference>
<dbReference type="HAMAP" id="MF_00046">
    <property type="entry name" value="MurC"/>
    <property type="match status" value="1"/>
</dbReference>
<dbReference type="InterPro" id="IPR036565">
    <property type="entry name" value="Mur-like_cat_sf"/>
</dbReference>
<dbReference type="InterPro" id="IPR004101">
    <property type="entry name" value="Mur_ligase_C"/>
</dbReference>
<dbReference type="InterPro" id="IPR036615">
    <property type="entry name" value="Mur_ligase_C_dom_sf"/>
</dbReference>
<dbReference type="InterPro" id="IPR013221">
    <property type="entry name" value="Mur_ligase_cen"/>
</dbReference>
<dbReference type="InterPro" id="IPR000713">
    <property type="entry name" value="Mur_ligase_N"/>
</dbReference>
<dbReference type="InterPro" id="IPR050061">
    <property type="entry name" value="MurCDEF_pg_biosynth"/>
</dbReference>
<dbReference type="InterPro" id="IPR005758">
    <property type="entry name" value="UDP-N-AcMur_Ala_ligase_MurC"/>
</dbReference>
<dbReference type="NCBIfam" id="TIGR01082">
    <property type="entry name" value="murC"/>
    <property type="match status" value="1"/>
</dbReference>
<dbReference type="PANTHER" id="PTHR43445:SF3">
    <property type="entry name" value="UDP-N-ACETYLMURAMATE--L-ALANINE LIGASE"/>
    <property type="match status" value="1"/>
</dbReference>
<dbReference type="PANTHER" id="PTHR43445">
    <property type="entry name" value="UDP-N-ACETYLMURAMATE--L-ALANINE LIGASE-RELATED"/>
    <property type="match status" value="1"/>
</dbReference>
<dbReference type="Pfam" id="PF01225">
    <property type="entry name" value="Mur_ligase"/>
    <property type="match status" value="1"/>
</dbReference>
<dbReference type="Pfam" id="PF02875">
    <property type="entry name" value="Mur_ligase_C"/>
    <property type="match status" value="1"/>
</dbReference>
<dbReference type="Pfam" id="PF08245">
    <property type="entry name" value="Mur_ligase_M"/>
    <property type="match status" value="1"/>
</dbReference>
<dbReference type="SUPFAM" id="SSF51984">
    <property type="entry name" value="MurCD N-terminal domain"/>
    <property type="match status" value="1"/>
</dbReference>
<dbReference type="SUPFAM" id="SSF53623">
    <property type="entry name" value="MurD-like peptide ligases, catalytic domain"/>
    <property type="match status" value="1"/>
</dbReference>
<dbReference type="SUPFAM" id="SSF53244">
    <property type="entry name" value="MurD-like peptide ligases, peptide-binding domain"/>
    <property type="match status" value="1"/>
</dbReference>
<reference key="1">
    <citation type="submission" date="2007-03" db="EMBL/GenBank/DDBJ databases">
        <title>Genome sequence of Rhodospirillum centenum.</title>
        <authorList>
            <person name="Touchman J.W."/>
            <person name="Bauer C."/>
            <person name="Blankenship R.E."/>
        </authorList>
    </citation>
    <scope>NUCLEOTIDE SEQUENCE [LARGE SCALE GENOMIC DNA]</scope>
    <source>
        <strain>ATCC 51521 / SW</strain>
    </source>
</reference>
<feature type="chain" id="PRO_1000091126" description="UDP-N-acetylmuramate--L-alanine ligase">
    <location>
        <begin position="1"/>
        <end position="482"/>
    </location>
</feature>
<feature type="binding site" evidence="1">
    <location>
        <begin position="115"/>
        <end position="121"/>
    </location>
    <ligand>
        <name>ATP</name>
        <dbReference type="ChEBI" id="CHEBI:30616"/>
    </ligand>
</feature>
<name>MURC_RHOCS</name>